<comment type="function">
    <text evidence="1">RNaseP catalyzes the removal of the 5'-leader sequence from pre-tRNA to produce the mature 5'-terminus. It can also cleave other RNA substrates such as 4.5S RNA. The protein component plays an auxiliary but essential role in vivo by binding to the 5'-leader sequence and broadening the substrate specificity of the ribozyme.</text>
</comment>
<comment type="catalytic activity">
    <reaction evidence="1">
        <text>Endonucleolytic cleavage of RNA, removing 5'-extranucleotides from tRNA precursor.</text>
        <dbReference type="EC" id="3.1.26.5"/>
    </reaction>
</comment>
<comment type="subunit">
    <text evidence="1">Consists of a catalytic RNA component (M1 or rnpB) and a protein subunit.</text>
</comment>
<comment type="similarity">
    <text evidence="1">Belongs to the RnpA family.</text>
</comment>
<dbReference type="EC" id="3.1.26.5" evidence="1"/>
<dbReference type="EMBL" id="FM209186">
    <property type="protein sequence ID" value="CAW30719.1"/>
    <property type="molecule type" value="Genomic_DNA"/>
</dbReference>
<dbReference type="RefSeq" id="WP_012614717.1">
    <property type="nucleotide sequence ID" value="NC_011770.1"/>
</dbReference>
<dbReference type="SMR" id="B7V7A6"/>
<dbReference type="KEGG" id="pag:PLES_59651"/>
<dbReference type="HOGENOM" id="CLU_117179_11_0_6"/>
<dbReference type="GO" id="GO:0030677">
    <property type="term" value="C:ribonuclease P complex"/>
    <property type="evidence" value="ECO:0007669"/>
    <property type="project" value="TreeGrafter"/>
</dbReference>
<dbReference type="GO" id="GO:0042781">
    <property type="term" value="F:3'-tRNA processing endoribonuclease activity"/>
    <property type="evidence" value="ECO:0007669"/>
    <property type="project" value="TreeGrafter"/>
</dbReference>
<dbReference type="GO" id="GO:0004526">
    <property type="term" value="F:ribonuclease P activity"/>
    <property type="evidence" value="ECO:0007669"/>
    <property type="project" value="UniProtKB-UniRule"/>
</dbReference>
<dbReference type="GO" id="GO:0000049">
    <property type="term" value="F:tRNA binding"/>
    <property type="evidence" value="ECO:0007669"/>
    <property type="project" value="UniProtKB-UniRule"/>
</dbReference>
<dbReference type="GO" id="GO:0001682">
    <property type="term" value="P:tRNA 5'-leader removal"/>
    <property type="evidence" value="ECO:0007669"/>
    <property type="project" value="UniProtKB-UniRule"/>
</dbReference>
<dbReference type="Gene3D" id="3.30.230.10">
    <property type="match status" value="1"/>
</dbReference>
<dbReference type="HAMAP" id="MF_00227">
    <property type="entry name" value="RNase_P"/>
    <property type="match status" value="1"/>
</dbReference>
<dbReference type="InterPro" id="IPR020568">
    <property type="entry name" value="Ribosomal_Su5_D2-typ_SF"/>
</dbReference>
<dbReference type="InterPro" id="IPR014721">
    <property type="entry name" value="Ribsml_uS5_D2-typ_fold_subgr"/>
</dbReference>
<dbReference type="InterPro" id="IPR000100">
    <property type="entry name" value="RNase_P"/>
</dbReference>
<dbReference type="InterPro" id="IPR020539">
    <property type="entry name" value="RNase_P_CS"/>
</dbReference>
<dbReference type="NCBIfam" id="TIGR00188">
    <property type="entry name" value="rnpA"/>
    <property type="match status" value="1"/>
</dbReference>
<dbReference type="PANTHER" id="PTHR33992">
    <property type="entry name" value="RIBONUCLEASE P PROTEIN COMPONENT"/>
    <property type="match status" value="1"/>
</dbReference>
<dbReference type="PANTHER" id="PTHR33992:SF1">
    <property type="entry name" value="RIBONUCLEASE P PROTEIN COMPONENT"/>
    <property type="match status" value="1"/>
</dbReference>
<dbReference type="Pfam" id="PF00825">
    <property type="entry name" value="Ribonuclease_P"/>
    <property type="match status" value="1"/>
</dbReference>
<dbReference type="SUPFAM" id="SSF54211">
    <property type="entry name" value="Ribosomal protein S5 domain 2-like"/>
    <property type="match status" value="1"/>
</dbReference>
<dbReference type="PROSITE" id="PS00648">
    <property type="entry name" value="RIBONUCLEASE_P"/>
    <property type="match status" value="1"/>
</dbReference>
<name>RNPA_PSEA8</name>
<accession>B7V7A6</accession>
<organism>
    <name type="scientific">Pseudomonas aeruginosa (strain LESB58)</name>
    <dbReference type="NCBI Taxonomy" id="557722"/>
    <lineage>
        <taxon>Bacteria</taxon>
        <taxon>Pseudomonadati</taxon>
        <taxon>Pseudomonadota</taxon>
        <taxon>Gammaproteobacteria</taxon>
        <taxon>Pseudomonadales</taxon>
        <taxon>Pseudomonadaceae</taxon>
        <taxon>Pseudomonas</taxon>
    </lineage>
</organism>
<keyword id="KW-0255">Endonuclease</keyword>
<keyword id="KW-0378">Hydrolase</keyword>
<keyword id="KW-0540">Nuclease</keyword>
<keyword id="KW-0694">RNA-binding</keyword>
<keyword id="KW-0819">tRNA processing</keyword>
<evidence type="ECO:0000255" key="1">
    <source>
        <dbReference type="HAMAP-Rule" id="MF_00227"/>
    </source>
</evidence>
<gene>
    <name evidence="1" type="primary">rnpA</name>
    <name type="ordered locus">PLES_59651</name>
</gene>
<sequence length="135" mass="15326">MVSRDFDRDKRLLTARQFSAVFDSPIGKVPGKHVLLLARENGLDHPRLGLVIGKKNVKLAVQRNRLKRLIRESFRHNQETLAGWDIVVIARKGLGELENPELHQQFGKLWKRLLRNRPRTESPADAPGVADGTHA</sequence>
<feature type="chain" id="PRO_1000194665" description="Ribonuclease P protein component">
    <location>
        <begin position="1"/>
        <end position="135"/>
    </location>
</feature>
<reference key="1">
    <citation type="journal article" date="2009" name="Genome Res.">
        <title>Newly introduced genomic prophage islands are critical determinants of in vivo competitiveness in the Liverpool epidemic strain of Pseudomonas aeruginosa.</title>
        <authorList>
            <person name="Winstanley C."/>
            <person name="Langille M.G.I."/>
            <person name="Fothergill J.L."/>
            <person name="Kukavica-Ibrulj I."/>
            <person name="Paradis-Bleau C."/>
            <person name="Sanschagrin F."/>
            <person name="Thomson N.R."/>
            <person name="Winsor G.L."/>
            <person name="Quail M.A."/>
            <person name="Lennard N."/>
            <person name="Bignell A."/>
            <person name="Clarke L."/>
            <person name="Seeger K."/>
            <person name="Saunders D."/>
            <person name="Harris D."/>
            <person name="Parkhill J."/>
            <person name="Hancock R.E.W."/>
            <person name="Brinkman F.S.L."/>
            <person name="Levesque R.C."/>
        </authorList>
    </citation>
    <scope>NUCLEOTIDE SEQUENCE [LARGE SCALE GENOMIC DNA]</scope>
    <source>
        <strain>LESB58</strain>
    </source>
</reference>
<proteinExistence type="inferred from homology"/>
<protein>
    <recommendedName>
        <fullName evidence="1">Ribonuclease P protein component</fullName>
        <shortName evidence="1">RNase P protein</shortName>
        <shortName evidence="1">RNaseP protein</shortName>
        <ecNumber evidence="1">3.1.26.5</ecNumber>
    </recommendedName>
    <alternativeName>
        <fullName evidence="1">Protein C5</fullName>
    </alternativeName>
</protein>